<comment type="function">
    <text evidence="1">Catalyzes the conversion of 4-hydroxy-tetrahydrodipicolinate (HTPA) to tetrahydrodipicolinate.</text>
</comment>
<comment type="catalytic activity">
    <reaction evidence="1">
        <text>(S)-2,3,4,5-tetrahydrodipicolinate + NAD(+) + H2O = (2S,4S)-4-hydroxy-2,3,4,5-tetrahydrodipicolinate + NADH + H(+)</text>
        <dbReference type="Rhea" id="RHEA:35323"/>
        <dbReference type="ChEBI" id="CHEBI:15377"/>
        <dbReference type="ChEBI" id="CHEBI:15378"/>
        <dbReference type="ChEBI" id="CHEBI:16845"/>
        <dbReference type="ChEBI" id="CHEBI:57540"/>
        <dbReference type="ChEBI" id="CHEBI:57945"/>
        <dbReference type="ChEBI" id="CHEBI:67139"/>
        <dbReference type="EC" id="1.17.1.8"/>
    </reaction>
</comment>
<comment type="catalytic activity">
    <reaction evidence="1">
        <text>(S)-2,3,4,5-tetrahydrodipicolinate + NADP(+) + H2O = (2S,4S)-4-hydroxy-2,3,4,5-tetrahydrodipicolinate + NADPH + H(+)</text>
        <dbReference type="Rhea" id="RHEA:35331"/>
        <dbReference type="ChEBI" id="CHEBI:15377"/>
        <dbReference type="ChEBI" id="CHEBI:15378"/>
        <dbReference type="ChEBI" id="CHEBI:16845"/>
        <dbReference type="ChEBI" id="CHEBI:57783"/>
        <dbReference type="ChEBI" id="CHEBI:58349"/>
        <dbReference type="ChEBI" id="CHEBI:67139"/>
        <dbReference type="EC" id="1.17.1.8"/>
    </reaction>
</comment>
<comment type="pathway">
    <text evidence="1">Amino-acid biosynthesis; L-lysine biosynthesis via DAP pathway; (S)-tetrahydrodipicolinate from L-aspartate: step 4/4.</text>
</comment>
<comment type="subcellular location">
    <subcellularLocation>
        <location evidence="1">Cytoplasm</location>
    </subcellularLocation>
</comment>
<comment type="similarity">
    <text evidence="1">Belongs to the DapB family.</text>
</comment>
<comment type="caution">
    <text evidence="2">Was originally thought to be a dihydrodipicolinate reductase (DHDPR), catalyzing the conversion of dihydrodipicolinate to tetrahydrodipicolinate. However, it was shown in E.coli that the substrate of the enzymatic reaction is not dihydrodipicolinate (DHDP) but in fact (2S,4S)-4-hydroxy-2,3,4,5-tetrahydrodipicolinic acid (HTPA), the product released by the DapA-catalyzed reaction.</text>
</comment>
<keyword id="KW-0028">Amino-acid biosynthesis</keyword>
<keyword id="KW-0963">Cytoplasm</keyword>
<keyword id="KW-0220">Diaminopimelate biosynthesis</keyword>
<keyword id="KW-0457">Lysine biosynthesis</keyword>
<keyword id="KW-0520">NAD</keyword>
<keyword id="KW-0521">NADP</keyword>
<keyword id="KW-0560">Oxidoreductase</keyword>
<reference key="1">
    <citation type="journal article" date="2004" name="Nat. Biotechnol.">
        <title>Complete genome sequence of the metabolically versatile photosynthetic bacterium Rhodopseudomonas palustris.</title>
        <authorList>
            <person name="Larimer F.W."/>
            <person name="Chain P."/>
            <person name="Hauser L."/>
            <person name="Lamerdin J.E."/>
            <person name="Malfatti S."/>
            <person name="Do L."/>
            <person name="Land M.L."/>
            <person name="Pelletier D.A."/>
            <person name="Beatty J.T."/>
            <person name="Lang A.S."/>
            <person name="Tabita F.R."/>
            <person name="Gibson J.L."/>
            <person name="Hanson T.E."/>
            <person name="Bobst C."/>
            <person name="Torres y Torres J.L."/>
            <person name="Peres C."/>
            <person name="Harrison F.H."/>
            <person name="Gibson J."/>
            <person name="Harwood C.S."/>
        </authorList>
    </citation>
    <scope>NUCLEOTIDE SEQUENCE [LARGE SCALE GENOMIC DNA]</scope>
    <source>
        <strain>ATCC BAA-98 / CGA009</strain>
    </source>
</reference>
<proteinExistence type="inferred from homology"/>
<dbReference type="EC" id="1.17.1.8" evidence="1"/>
<dbReference type="EMBL" id="BX572594">
    <property type="protein sequence ID" value="CAE25783.1"/>
    <property type="molecule type" value="Genomic_DNA"/>
</dbReference>
<dbReference type="RefSeq" id="WP_011155907.1">
    <property type="nucleotide sequence ID" value="NZ_CP116810.1"/>
</dbReference>
<dbReference type="SMR" id="Q6NCX8"/>
<dbReference type="STRING" id="258594.RPA0339"/>
<dbReference type="GeneID" id="66891350"/>
<dbReference type="eggNOG" id="COG0289">
    <property type="taxonomic scope" value="Bacteria"/>
</dbReference>
<dbReference type="HOGENOM" id="CLU_047479_2_1_5"/>
<dbReference type="PhylomeDB" id="Q6NCX8"/>
<dbReference type="UniPathway" id="UPA00034">
    <property type="reaction ID" value="UER00018"/>
</dbReference>
<dbReference type="GO" id="GO:0005829">
    <property type="term" value="C:cytosol"/>
    <property type="evidence" value="ECO:0007669"/>
    <property type="project" value="TreeGrafter"/>
</dbReference>
<dbReference type="GO" id="GO:0008839">
    <property type="term" value="F:4-hydroxy-tetrahydrodipicolinate reductase"/>
    <property type="evidence" value="ECO:0007669"/>
    <property type="project" value="UniProtKB-EC"/>
</dbReference>
<dbReference type="GO" id="GO:0051287">
    <property type="term" value="F:NAD binding"/>
    <property type="evidence" value="ECO:0007669"/>
    <property type="project" value="UniProtKB-UniRule"/>
</dbReference>
<dbReference type="GO" id="GO:0050661">
    <property type="term" value="F:NADP binding"/>
    <property type="evidence" value="ECO:0007669"/>
    <property type="project" value="UniProtKB-UniRule"/>
</dbReference>
<dbReference type="GO" id="GO:0016726">
    <property type="term" value="F:oxidoreductase activity, acting on CH or CH2 groups, NAD or NADP as acceptor"/>
    <property type="evidence" value="ECO:0007669"/>
    <property type="project" value="UniProtKB-UniRule"/>
</dbReference>
<dbReference type="GO" id="GO:0019877">
    <property type="term" value="P:diaminopimelate biosynthetic process"/>
    <property type="evidence" value="ECO:0007669"/>
    <property type="project" value="UniProtKB-UniRule"/>
</dbReference>
<dbReference type="GO" id="GO:0009089">
    <property type="term" value="P:lysine biosynthetic process via diaminopimelate"/>
    <property type="evidence" value="ECO:0007669"/>
    <property type="project" value="UniProtKB-UniRule"/>
</dbReference>
<dbReference type="CDD" id="cd02274">
    <property type="entry name" value="DHDPR_N"/>
    <property type="match status" value="1"/>
</dbReference>
<dbReference type="FunFam" id="3.30.360.10:FF:000004">
    <property type="entry name" value="4-hydroxy-tetrahydrodipicolinate reductase"/>
    <property type="match status" value="1"/>
</dbReference>
<dbReference type="Gene3D" id="3.30.360.10">
    <property type="entry name" value="Dihydrodipicolinate Reductase, domain 2"/>
    <property type="match status" value="1"/>
</dbReference>
<dbReference type="Gene3D" id="3.40.50.720">
    <property type="entry name" value="NAD(P)-binding Rossmann-like Domain"/>
    <property type="match status" value="1"/>
</dbReference>
<dbReference type="HAMAP" id="MF_00102">
    <property type="entry name" value="DapB"/>
    <property type="match status" value="1"/>
</dbReference>
<dbReference type="InterPro" id="IPR022663">
    <property type="entry name" value="DapB_C"/>
</dbReference>
<dbReference type="InterPro" id="IPR000846">
    <property type="entry name" value="DapB_N"/>
</dbReference>
<dbReference type="InterPro" id="IPR022664">
    <property type="entry name" value="DapB_N_CS"/>
</dbReference>
<dbReference type="InterPro" id="IPR023940">
    <property type="entry name" value="DHDPR_bac"/>
</dbReference>
<dbReference type="InterPro" id="IPR036291">
    <property type="entry name" value="NAD(P)-bd_dom_sf"/>
</dbReference>
<dbReference type="NCBIfam" id="TIGR00036">
    <property type="entry name" value="dapB"/>
    <property type="match status" value="1"/>
</dbReference>
<dbReference type="PANTHER" id="PTHR20836:SF0">
    <property type="entry name" value="4-HYDROXY-TETRAHYDRODIPICOLINATE REDUCTASE 1, CHLOROPLASTIC-RELATED"/>
    <property type="match status" value="1"/>
</dbReference>
<dbReference type="PANTHER" id="PTHR20836">
    <property type="entry name" value="DIHYDRODIPICOLINATE REDUCTASE"/>
    <property type="match status" value="1"/>
</dbReference>
<dbReference type="Pfam" id="PF05173">
    <property type="entry name" value="DapB_C"/>
    <property type="match status" value="1"/>
</dbReference>
<dbReference type="Pfam" id="PF01113">
    <property type="entry name" value="DapB_N"/>
    <property type="match status" value="1"/>
</dbReference>
<dbReference type="PIRSF" id="PIRSF000161">
    <property type="entry name" value="DHPR"/>
    <property type="match status" value="1"/>
</dbReference>
<dbReference type="SUPFAM" id="SSF55347">
    <property type="entry name" value="Glyceraldehyde-3-phosphate dehydrogenase-like, C-terminal domain"/>
    <property type="match status" value="1"/>
</dbReference>
<dbReference type="SUPFAM" id="SSF51735">
    <property type="entry name" value="NAD(P)-binding Rossmann-fold domains"/>
    <property type="match status" value="1"/>
</dbReference>
<dbReference type="PROSITE" id="PS01298">
    <property type="entry name" value="DAPB"/>
    <property type="match status" value="1"/>
</dbReference>
<accession>Q6NCX8</accession>
<organism>
    <name type="scientific">Rhodopseudomonas palustris (strain ATCC BAA-98 / CGA009)</name>
    <dbReference type="NCBI Taxonomy" id="258594"/>
    <lineage>
        <taxon>Bacteria</taxon>
        <taxon>Pseudomonadati</taxon>
        <taxon>Pseudomonadota</taxon>
        <taxon>Alphaproteobacteria</taxon>
        <taxon>Hyphomicrobiales</taxon>
        <taxon>Nitrobacteraceae</taxon>
        <taxon>Rhodopseudomonas</taxon>
    </lineage>
</organism>
<protein>
    <recommendedName>
        <fullName evidence="1">4-hydroxy-tetrahydrodipicolinate reductase</fullName>
        <shortName evidence="1">HTPA reductase</shortName>
        <ecNumber evidence="1">1.17.1.8</ecNumber>
    </recommendedName>
</protein>
<sequence length="271" mass="27784">MSEMRLIVAGAGGRMGRALTRAISETEGVVLTGALESPNSELLGKDAGTLAGLPANGVLLSADLWSLSANADGIVDFTVPQATIANVAIAAQRGIAHIIGTTGLSTSDNAVIQSVTDRAVVVKSGNMSLGVNLLAAIAKRVAQSLDDSFDIEIVEMHHRAKVDAPSGTALLLGEAVAAGRKIDLATHSARGRDGFTGARKPGDIGFASLRGGTVTGDHTVIFAGASERIELTHKAEDRMIFAHGALTAARWAKGKKPGLYSMADVLGLGDI</sequence>
<feature type="chain" id="PRO_0000228381" description="4-hydroxy-tetrahydrodipicolinate reductase">
    <location>
        <begin position="1"/>
        <end position="271"/>
    </location>
</feature>
<feature type="active site" description="Proton donor/acceptor" evidence="1">
    <location>
        <position position="157"/>
    </location>
</feature>
<feature type="active site" description="Proton donor" evidence="1">
    <location>
        <position position="161"/>
    </location>
</feature>
<feature type="binding site" evidence="1">
    <location>
        <begin position="10"/>
        <end position="15"/>
    </location>
    <ligand>
        <name>NAD(+)</name>
        <dbReference type="ChEBI" id="CHEBI:57540"/>
    </ligand>
</feature>
<feature type="binding site" evidence="1">
    <location>
        <position position="36"/>
    </location>
    <ligand>
        <name>NAD(+)</name>
        <dbReference type="ChEBI" id="CHEBI:57540"/>
    </ligand>
</feature>
<feature type="binding site" evidence="1">
    <location>
        <begin position="100"/>
        <end position="102"/>
    </location>
    <ligand>
        <name>NAD(+)</name>
        <dbReference type="ChEBI" id="CHEBI:57540"/>
    </ligand>
</feature>
<feature type="binding site" evidence="1">
    <location>
        <begin position="124"/>
        <end position="127"/>
    </location>
    <ligand>
        <name>NAD(+)</name>
        <dbReference type="ChEBI" id="CHEBI:57540"/>
    </ligand>
</feature>
<feature type="binding site" evidence="1">
    <location>
        <position position="158"/>
    </location>
    <ligand>
        <name>(S)-2,3,4,5-tetrahydrodipicolinate</name>
        <dbReference type="ChEBI" id="CHEBI:16845"/>
    </ligand>
</feature>
<feature type="binding site" evidence="1">
    <location>
        <begin position="167"/>
        <end position="168"/>
    </location>
    <ligand>
        <name>(S)-2,3,4,5-tetrahydrodipicolinate</name>
        <dbReference type="ChEBI" id="CHEBI:16845"/>
    </ligand>
</feature>
<name>DAPB_RHOPA</name>
<gene>
    <name evidence="1" type="primary">dapB</name>
    <name type="ordered locus">RPA0339</name>
</gene>
<evidence type="ECO:0000255" key="1">
    <source>
        <dbReference type="HAMAP-Rule" id="MF_00102"/>
    </source>
</evidence>
<evidence type="ECO:0000305" key="2"/>